<accession>Q5R8G6</accession>
<sequence>MAGTVVLDDVELREAQRDYLDFLDDEEDQGIYQSKVRELISDNQYRLIVNVNDLRRKNEKRANRLLNNAFEELVAFQRALKDFVASIDATYAKQYEEFYVGLEGSFGSKHVSPRTLTSCFLSCVVCVEGIVTKCSLVRPKVVRSVHYCPATKKTIERRYSDLTTLVAFPSSSVYPTKDEENNPLETEYGLSVYKDHQTITIQEMPEKAPAGQLPRSVDVILDDDLVDKAKPGDRVQVVGTYRCLPGKKGGYTSGTFRTVLIACNVKQMSKDAQPSFSAEDIAKIKKFSKTRSKDIFDQLARSLAPSIHGHDYVKKAILCLLLGGVERDLENGSHIRGDINILLIGDPSVAKSQLLRYVLCTAPRAIPTTGRGSSGVGLTAAVTTDQETGERRLEAGAMVLADRGVVCIDEFDKMSDMDRTAIHEVMEQGRVTIAKAGIHARLNARCSVLAAANPVYGRYDQYKTPMENIGLQDSLLSRFDLLFIMLDQMDPEQDREISDHVLRMHRYRAPGEQDGDAMPLGSAVDILATDDPNFSQEDQQDTQIYEKHDNLLHGTKKKKEKMVSAAFMKKYIHVAKIIKPVLTQESATYIAEEYSRLRSQDSMSSDTARTSPVTARTLETLIRLATAHAKARMSKTVDLQDAEEAVELVQYAYFKKVLEKEKKRKKRSEDESETEDEEEKSQEDQEQKRKRRKTRQSDAKDGDSYDPYDFSDTEEEMPQVHTPKTADSQETKESQKVELSESRLKAFKVALLDVFREAHAQSIGMNRLTESINRDSEEPFSSVEIQAALSKMQDDNQVMVSEGIIFLI</sequence>
<proteinExistence type="evidence at transcript level"/>
<comment type="function">
    <text evidence="1">Acts as a component of the MCM2-7 complex (MCM complex) which is the replicative helicase essential for 'once per cell cycle' DNA replication initiation and elongation in eukaryotic cells. Core component of CDC45-MCM-GINS (CMG) helicase, the molecular machine that unwinds template DNA during replication, and around which the replisome is built. The active ATPase sites in the MCM2-7 ring are formed through the interaction surfaces of two neighboring subunits such that a critical structure of a conserved arginine finger motif is provided in trans relative to the ATP-binding site of the Walker A box of the adjacent subunit. The six ATPase active sites, however, are likely to contribute differentially to the complex helicase activity. Required for the entry in S phase and for cell division.</text>
</comment>
<comment type="catalytic activity">
    <reaction evidence="1">
        <text>ATP + H2O = ADP + phosphate + H(+)</text>
        <dbReference type="Rhea" id="RHEA:13065"/>
        <dbReference type="ChEBI" id="CHEBI:15377"/>
        <dbReference type="ChEBI" id="CHEBI:15378"/>
        <dbReference type="ChEBI" id="CHEBI:30616"/>
        <dbReference type="ChEBI" id="CHEBI:43474"/>
        <dbReference type="ChEBI" id="CHEBI:456216"/>
        <dbReference type="EC" id="3.6.4.12"/>
    </reaction>
    <physiologicalReaction direction="left-to-right" evidence="1">
        <dbReference type="Rhea" id="RHEA:13066"/>
    </physiologicalReaction>
</comment>
<comment type="subunit">
    <text evidence="1 2 3">Component of the MCM2-7 complex. The complex forms a toroidal hexameric ring with the proposed subunit order MCM2-MCM6-MCM4-MCM7-MCM3-MCM5. Component of the CMG helicase complex, a hexameric ring of related MCM2-7 subunits stabilized by CDC45 and the tetrameric GINS complex (By similarity). Associated with the replication-specific DNA polymerase alpha (By similarity). Interacts with MCMBP. Interacts with ANKRD17. Interacts with MCM3AP isoform MCM3AP; this interaction leads to MCM3 acetylation (By similarity).</text>
</comment>
<comment type="subcellular location">
    <subcellularLocation>
        <location evidence="1">Nucleus</location>
    </subcellularLocation>
    <subcellularLocation>
        <location evidence="1">Chromosome</location>
    </subcellularLocation>
    <text evidence="1">Associated with chromatin before the formation of nuclei and detaches from it as DNA replication progresses.</text>
</comment>
<comment type="PTM">
    <text evidence="1">Acetylated by MCM3AP.</text>
</comment>
<comment type="PTM">
    <text evidence="1">O-glycosylated (O-GlcNAcylated), in a cell cycle-dependent manner.</text>
</comment>
<comment type="similarity">
    <text evidence="5">Belongs to the MCM family.</text>
</comment>
<protein>
    <recommendedName>
        <fullName>DNA replication licensing factor MCM3</fullName>
        <ecNumber>3.6.4.12</ecNumber>
    </recommendedName>
</protein>
<reference key="1">
    <citation type="submission" date="2004-11" db="EMBL/GenBank/DDBJ databases">
        <authorList>
            <consortium name="The German cDNA consortium"/>
        </authorList>
    </citation>
    <scope>NUCLEOTIDE SEQUENCE [LARGE SCALE MRNA]</scope>
    <source>
        <tissue>Heart</tissue>
    </source>
</reference>
<keyword id="KW-0007">Acetylation</keyword>
<keyword id="KW-0067">ATP-binding</keyword>
<keyword id="KW-0131">Cell cycle</keyword>
<keyword id="KW-0158">Chromosome</keyword>
<keyword id="KW-0235">DNA replication</keyword>
<keyword id="KW-0238">DNA-binding</keyword>
<keyword id="KW-0325">Glycoprotein</keyword>
<keyword id="KW-0347">Helicase</keyword>
<keyword id="KW-0378">Hydrolase</keyword>
<keyword id="KW-0547">Nucleotide-binding</keyword>
<keyword id="KW-0539">Nucleus</keyword>
<keyword id="KW-0597">Phosphoprotein</keyword>
<keyword id="KW-1185">Reference proteome</keyword>
<name>MCM3_PONAB</name>
<dbReference type="EC" id="3.6.4.12"/>
<dbReference type="EMBL" id="CR859786">
    <property type="protein sequence ID" value="CAH91944.1"/>
    <property type="molecule type" value="mRNA"/>
</dbReference>
<dbReference type="RefSeq" id="NP_001126128.1">
    <property type="nucleotide sequence ID" value="NM_001132656.1"/>
</dbReference>
<dbReference type="SMR" id="Q5R8G6"/>
<dbReference type="FunCoup" id="Q5R8G6">
    <property type="interactions" value="2078"/>
</dbReference>
<dbReference type="STRING" id="9601.ENSPPYP00000018688"/>
<dbReference type="GeneID" id="100173085"/>
<dbReference type="KEGG" id="pon:100173085"/>
<dbReference type="CTD" id="4172"/>
<dbReference type="eggNOG" id="KOG0479">
    <property type="taxonomic scope" value="Eukaryota"/>
</dbReference>
<dbReference type="InParanoid" id="Q5R8G6"/>
<dbReference type="OrthoDB" id="1882346at2759"/>
<dbReference type="Proteomes" id="UP000001595">
    <property type="component" value="Unplaced"/>
</dbReference>
<dbReference type="GO" id="GO:0071162">
    <property type="term" value="C:CMG complex"/>
    <property type="evidence" value="ECO:0000250"/>
    <property type="project" value="UniProtKB"/>
</dbReference>
<dbReference type="GO" id="GO:0042555">
    <property type="term" value="C:MCM complex"/>
    <property type="evidence" value="ECO:0000250"/>
    <property type="project" value="UniProtKB"/>
</dbReference>
<dbReference type="GO" id="GO:0005524">
    <property type="term" value="F:ATP binding"/>
    <property type="evidence" value="ECO:0007669"/>
    <property type="project" value="UniProtKB-KW"/>
</dbReference>
<dbReference type="GO" id="GO:0016887">
    <property type="term" value="F:ATP hydrolysis activity"/>
    <property type="evidence" value="ECO:0007669"/>
    <property type="project" value="InterPro"/>
</dbReference>
<dbReference type="GO" id="GO:0003697">
    <property type="term" value="F:single-stranded DNA binding"/>
    <property type="evidence" value="ECO:0007669"/>
    <property type="project" value="TreeGrafter"/>
</dbReference>
<dbReference type="GO" id="GO:0017116">
    <property type="term" value="F:single-stranded DNA helicase activity"/>
    <property type="evidence" value="ECO:0007669"/>
    <property type="project" value="TreeGrafter"/>
</dbReference>
<dbReference type="GO" id="GO:0006271">
    <property type="term" value="P:DNA strand elongation involved in DNA replication"/>
    <property type="evidence" value="ECO:0007669"/>
    <property type="project" value="TreeGrafter"/>
</dbReference>
<dbReference type="GO" id="GO:0000727">
    <property type="term" value="P:double-strand break repair via break-induced replication"/>
    <property type="evidence" value="ECO:0007669"/>
    <property type="project" value="TreeGrafter"/>
</dbReference>
<dbReference type="GO" id="GO:1902975">
    <property type="term" value="P:mitotic DNA replication initiation"/>
    <property type="evidence" value="ECO:0007669"/>
    <property type="project" value="TreeGrafter"/>
</dbReference>
<dbReference type="CDD" id="cd17754">
    <property type="entry name" value="MCM3"/>
    <property type="match status" value="1"/>
</dbReference>
<dbReference type="FunFam" id="2.20.28.10:FF:000006">
    <property type="entry name" value="DNA helicase"/>
    <property type="match status" value="1"/>
</dbReference>
<dbReference type="FunFam" id="3.30.1640.10:FF:000002">
    <property type="entry name" value="DNA helicase"/>
    <property type="match status" value="1"/>
</dbReference>
<dbReference type="FunFam" id="3.40.50.300:FF:000234">
    <property type="entry name" value="DNA helicase"/>
    <property type="match status" value="1"/>
</dbReference>
<dbReference type="Gene3D" id="2.20.28.10">
    <property type="match status" value="1"/>
</dbReference>
<dbReference type="Gene3D" id="3.30.1640.10">
    <property type="entry name" value="mini-chromosome maintenance (MCM) complex, chain A, domain 1"/>
    <property type="match status" value="1"/>
</dbReference>
<dbReference type="Gene3D" id="2.40.50.140">
    <property type="entry name" value="Nucleic acid-binding proteins"/>
    <property type="match status" value="1"/>
</dbReference>
<dbReference type="Gene3D" id="3.40.50.300">
    <property type="entry name" value="P-loop containing nucleotide triphosphate hydrolases"/>
    <property type="match status" value="1"/>
</dbReference>
<dbReference type="InterPro" id="IPR003593">
    <property type="entry name" value="AAA+_ATPase"/>
</dbReference>
<dbReference type="InterPro" id="IPR031327">
    <property type="entry name" value="MCM"/>
</dbReference>
<dbReference type="InterPro" id="IPR008046">
    <property type="entry name" value="Mcm3"/>
</dbReference>
<dbReference type="InterPro" id="IPR018525">
    <property type="entry name" value="MCM_CS"/>
</dbReference>
<dbReference type="InterPro" id="IPR001208">
    <property type="entry name" value="MCM_dom"/>
</dbReference>
<dbReference type="InterPro" id="IPR041562">
    <property type="entry name" value="MCM_lid"/>
</dbReference>
<dbReference type="InterPro" id="IPR027925">
    <property type="entry name" value="MCM_N"/>
</dbReference>
<dbReference type="InterPro" id="IPR033762">
    <property type="entry name" value="MCM_OB"/>
</dbReference>
<dbReference type="InterPro" id="IPR012340">
    <property type="entry name" value="NA-bd_OB-fold"/>
</dbReference>
<dbReference type="InterPro" id="IPR027417">
    <property type="entry name" value="P-loop_NTPase"/>
</dbReference>
<dbReference type="InterPro" id="IPR056575">
    <property type="entry name" value="WH_MCM3_C"/>
</dbReference>
<dbReference type="PANTHER" id="PTHR11630">
    <property type="entry name" value="DNA REPLICATION LICENSING FACTOR MCM FAMILY MEMBER"/>
    <property type="match status" value="1"/>
</dbReference>
<dbReference type="PANTHER" id="PTHR11630:SF106">
    <property type="entry name" value="DNA REPLICATION LICENSING FACTOR MCM3"/>
    <property type="match status" value="1"/>
</dbReference>
<dbReference type="Pfam" id="PF00493">
    <property type="entry name" value="MCM"/>
    <property type="match status" value="1"/>
</dbReference>
<dbReference type="Pfam" id="PF17855">
    <property type="entry name" value="MCM_lid"/>
    <property type="match status" value="1"/>
</dbReference>
<dbReference type="Pfam" id="PF14551">
    <property type="entry name" value="MCM_N"/>
    <property type="match status" value="1"/>
</dbReference>
<dbReference type="Pfam" id="PF17207">
    <property type="entry name" value="MCM_OB"/>
    <property type="match status" value="1"/>
</dbReference>
<dbReference type="Pfam" id="PF23191">
    <property type="entry name" value="WH_MCM3_C"/>
    <property type="match status" value="1"/>
</dbReference>
<dbReference type="PRINTS" id="PR01657">
    <property type="entry name" value="MCMFAMILY"/>
</dbReference>
<dbReference type="PRINTS" id="PR01659">
    <property type="entry name" value="MCMPROTEIN3"/>
</dbReference>
<dbReference type="SMART" id="SM00382">
    <property type="entry name" value="AAA"/>
    <property type="match status" value="1"/>
</dbReference>
<dbReference type="SMART" id="SM00350">
    <property type="entry name" value="MCM"/>
    <property type="match status" value="1"/>
</dbReference>
<dbReference type="SUPFAM" id="SSF50249">
    <property type="entry name" value="Nucleic acid-binding proteins"/>
    <property type="match status" value="1"/>
</dbReference>
<dbReference type="SUPFAM" id="SSF52540">
    <property type="entry name" value="P-loop containing nucleoside triphosphate hydrolases"/>
    <property type="match status" value="1"/>
</dbReference>
<dbReference type="PROSITE" id="PS00847">
    <property type="entry name" value="MCM_1"/>
    <property type="match status" value="1"/>
</dbReference>
<dbReference type="PROSITE" id="PS50051">
    <property type="entry name" value="MCM_2"/>
    <property type="match status" value="1"/>
</dbReference>
<organism>
    <name type="scientific">Pongo abelii</name>
    <name type="common">Sumatran orangutan</name>
    <name type="synonym">Pongo pygmaeus abelii</name>
    <dbReference type="NCBI Taxonomy" id="9601"/>
    <lineage>
        <taxon>Eukaryota</taxon>
        <taxon>Metazoa</taxon>
        <taxon>Chordata</taxon>
        <taxon>Craniata</taxon>
        <taxon>Vertebrata</taxon>
        <taxon>Euteleostomi</taxon>
        <taxon>Mammalia</taxon>
        <taxon>Eutheria</taxon>
        <taxon>Euarchontoglires</taxon>
        <taxon>Primates</taxon>
        <taxon>Haplorrhini</taxon>
        <taxon>Catarrhini</taxon>
        <taxon>Hominidae</taxon>
        <taxon>Pongo</taxon>
    </lineage>
</organism>
<gene>
    <name type="primary">MCM3</name>
</gene>
<evidence type="ECO:0000250" key="1">
    <source>
        <dbReference type="UniProtKB" id="P25205"/>
    </source>
</evidence>
<evidence type="ECO:0000250" key="2">
    <source>
        <dbReference type="UniProtKB" id="P25206"/>
    </source>
</evidence>
<evidence type="ECO:0000250" key="3">
    <source>
        <dbReference type="UniProtKB" id="P49739"/>
    </source>
</evidence>
<evidence type="ECO:0000256" key="4">
    <source>
        <dbReference type="SAM" id="MobiDB-lite"/>
    </source>
</evidence>
<evidence type="ECO:0000305" key="5"/>
<feature type="initiator methionine" description="Removed" evidence="1">
    <location>
        <position position="1"/>
    </location>
</feature>
<feature type="chain" id="PRO_0000318903" description="DNA replication licensing factor MCM3">
    <location>
        <begin position="2"/>
        <end position="808"/>
    </location>
</feature>
<feature type="domain" description="MCM">
    <location>
        <begin position="295"/>
        <end position="502"/>
    </location>
</feature>
<feature type="region of interest" description="Disordered" evidence="4">
    <location>
        <begin position="662"/>
        <end position="738"/>
    </location>
</feature>
<feature type="short sequence motif" description="Arginine finger">
    <location>
        <begin position="477"/>
        <end position="480"/>
    </location>
</feature>
<feature type="compositionally biased region" description="Acidic residues" evidence="4">
    <location>
        <begin position="670"/>
        <end position="681"/>
    </location>
</feature>
<feature type="compositionally biased region" description="Acidic residues" evidence="4">
    <location>
        <begin position="704"/>
        <end position="717"/>
    </location>
</feature>
<feature type="compositionally biased region" description="Basic and acidic residues" evidence="4">
    <location>
        <begin position="727"/>
        <end position="738"/>
    </location>
</feature>
<feature type="binding site" evidence="1">
    <location>
        <position position="353"/>
    </location>
    <ligand>
        <name>ADP</name>
        <dbReference type="ChEBI" id="CHEBI:456216"/>
        <note>ligand shared with MCM5</note>
    </ligand>
</feature>
<feature type="binding site" evidence="1">
    <location>
        <position position="393"/>
    </location>
    <ligand>
        <name>ADP</name>
        <dbReference type="ChEBI" id="CHEBI:456216"/>
        <note>ligand shared with MCM5</note>
    </ligand>
</feature>
<feature type="binding site" evidence="1">
    <location>
        <position position="394"/>
    </location>
    <ligand>
        <name>ADP</name>
        <dbReference type="ChEBI" id="CHEBI:456216"/>
        <note>ligand shared with MCM5</note>
    </ligand>
</feature>
<feature type="binding site" evidence="1">
    <location>
        <position position="395"/>
    </location>
    <ligand>
        <name>ADP</name>
        <dbReference type="ChEBI" id="CHEBI:456216"/>
        <note>ligand shared with MCM5</note>
    </ligand>
</feature>
<feature type="binding site" evidence="1">
    <location>
        <position position="397"/>
    </location>
    <ligand>
        <name>ADP</name>
        <dbReference type="ChEBI" id="CHEBI:456216"/>
        <note>ligand shared with MCM5</note>
    </ligand>
</feature>
<feature type="binding site" evidence="1">
    <location>
        <position position="523"/>
    </location>
    <ligand>
        <name>ATP</name>
        <dbReference type="ChEBI" id="CHEBI:30616"/>
        <note>ligand shared with MCM7</note>
    </ligand>
</feature>
<feature type="binding site" evidence="1">
    <location>
        <position position="664"/>
    </location>
    <ligand>
        <name>ATP</name>
        <dbReference type="ChEBI" id="CHEBI:30616"/>
        <note>ligand shared with MCM7</note>
    </ligand>
</feature>
<feature type="modified residue" description="N-acetylalanine" evidence="1">
    <location>
        <position position="2"/>
    </location>
</feature>
<feature type="modified residue" description="Phosphoserine" evidence="1">
    <location>
        <position position="160"/>
    </location>
</feature>
<feature type="modified residue" description="Phosphoserine" evidence="1">
    <location>
        <position position="275"/>
    </location>
</feature>
<feature type="modified residue" description="N6-acetyllysine" evidence="2">
    <location>
        <position position="293"/>
    </location>
</feature>
<feature type="modified residue" description="Phosphoserine; by ATM" evidence="1">
    <location>
        <position position="535"/>
    </location>
</feature>
<feature type="modified residue" description="N6-acetyllysine" evidence="2">
    <location>
        <position position="547"/>
    </location>
</feature>
<feature type="modified residue" description="Phosphoserine" evidence="1">
    <location>
        <position position="611"/>
    </location>
</feature>
<feature type="modified residue" description="Phosphoserine" evidence="1">
    <location>
        <position position="668"/>
    </location>
</feature>
<feature type="modified residue" description="Phosphoserine" evidence="1">
    <location>
        <position position="672"/>
    </location>
</feature>
<feature type="modified residue" description="Phosphothreonine" evidence="1">
    <location>
        <position position="674"/>
    </location>
</feature>
<feature type="modified residue" description="Phosphoserine" evidence="1">
    <location>
        <position position="681"/>
    </location>
</feature>
<feature type="modified residue" description="Phosphotyrosine" evidence="1">
    <location>
        <position position="708"/>
    </location>
</feature>
<feature type="modified residue" description="Phosphoserine" evidence="1">
    <location>
        <position position="711"/>
    </location>
</feature>
<feature type="modified residue" description="Phosphothreonine" evidence="1">
    <location>
        <position position="713"/>
    </location>
</feature>
<feature type="modified residue" description="Phosphothreonine" evidence="1">
    <location>
        <position position="722"/>
    </location>
</feature>
<feature type="modified residue" description="Phosphothreonine" evidence="1">
    <location>
        <position position="725"/>
    </location>
</feature>
<feature type="modified residue" description="Phosphoserine" evidence="2">
    <location>
        <position position="728"/>
    </location>
</feature>
<feature type="modified residue" description="Phosphoserine" evidence="2">
    <location>
        <position position="734"/>
    </location>
</feature>